<gene>
    <name evidence="1" type="primary">efp</name>
    <name type="ordered locus">THA_964</name>
</gene>
<reference key="1">
    <citation type="journal article" date="2009" name="J. Bacteriol.">
        <title>The genome of Thermosipho africanus TCF52B: lateral genetic connections to the Firmicutes and Archaea.</title>
        <authorList>
            <person name="Nesboe C.L."/>
            <person name="Bapteste E."/>
            <person name="Curtis B."/>
            <person name="Dahle H."/>
            <person name="Lopez P."/>
            <person name="Macleod D."/>
            <person name="Dlutek M."/>
            <person name="Bowman S."/>
            <person name="Zhaxybayeva O."/>
            <person name="Birkeland N.-K."/>
            <person name="Doolittle W.F."/>
        </authorList>
    </citation>
    <scope>NUCLEOTIDE SEQUENCE [LARGE SCALE GENOMIC DNA]</scope>
    <source>
        <strain>TCF52B</strain>
    </source>
</reference>
<keyword id="KW-0963">Cytoplasm</keyword>
<keyword id="KW-0251">Elongation factor</keyword>
<keyword id="KW-0648">Protein biosynthesis</keyword>
<keyword id="KW-1185">Reference proteome</keyword>
<evidence type="ECO:0000255" key="1">
    <source>
        <dbReference type="HAMAP-Rule" id="MF_00141"/>
    </source>
</evidence>
<sequence>MVDVGSLSKGMYIKYEGEIYRVIDVNKHFRARGSGLIRTKLKNMSTGLVREVNFNSGEKVEEAEITFRKASYIYNDGEKYYFMDNETFEQYGIPVSDIEEEKNYLVENTEVDLIMHDGKPIGIQLPTSVVLEVVETEPGFKGDTVSGGGKPAVLETGLKITVPFFVEKGQKVRVDTRTGEYIERA</sequence>
<accession>B7IH59</accession>
<protein>
    <recommendedName>
        <fullName evidence="1">Elongation factor P</fullName>
        <shortName evidence="1">EF-P</shortName>
    </recommendedName>
</protein>
<name>EFP_THEAB</name>
<proteinExistence type="inferred from homology"/>
<organism>
    <name type="scientific">Thermosipho africanus (strain TCF52B)</name>
    <dbReference type="NCBI Taxonomy" id="484019"/>
    <lineage>
        <taxon>Bacteria</taxon>
        <taxon>Thermotogati</taxon>
        <taxon>Thermotogota</taxon>
        <taxon>Thermotogae</taxon>
        <taxon>Thermotogales</taxon>
        <taxon>Fervidobacteriaceae</taxon>
        <taxon>Thermosipho</taxon>
    </lineage>
</organism>
<feature type="chain" id="PRO_1000117906" description="Elongation factor P">
    <location>
        <begin position="1"/>
        <end position="185"/>
    </location>
</feature>
<dbReference type="EMBL" id="CP001185">
    <property type="protein sequence ID" value="ACJ75423.1"/>
    <property type="molecule type" value="Genomic_DNA"/>
</dbReference>
<dbReference type="RefSeq" id="WP_004100925.1">
    <property type="nucleotide sequence ID" value="NC_011653.1"/>
</dbReference>
<dbReference type="SMR" id="B7IH59"/>
<dbReference type="STRING" id="484019.THA_964"/>
<dbReference type="KEGG" id="taf:THA_964"/>
<dbReference type="eggNOG" id="COG0231">
    <property type="taxonomic scope" value="Bacteria"/>
</dbReference>
<dbReference type="HOGENOM" id="CLU_074944_0_1_0"/>
<dbReference type="OrthoDB" id="9801844at2"/>
<dbReference type="UniPathway" id="UPA00345"/>
<dbReference type="Proteomes" id="UP000002453">
    <property type="component" value="Chromosome"/>
</dbReference>
<dbReference type="GO" id="GO:0005737">
    <property type="term" value="C:cytoplasm"/>
    <property type="evidence" value="ECO:0007669"/>
    <property type="project" value="UniProtKB-SubCell"/>
</dbReference>
<dbReference type="GO" id="GO:0003746">
    <property type="term" value="F:translation elongation factor activity"/>
    <property type="evidence" value="ECO:0007669"/>
    <property type="project" value="UniProtKB-UniRule"/>
</dbReference>
<dbReference type="GO" id="GO:0043043">
    <property type="term" value="P:peptide biosynthetic process"/>
    <property type="evidence" value="ECO:0007669"/>
    <property type="project" value="InterPro"/>
</dbReference>
<dbReference type="CDD" id="cd04470">
    <property type="entry name" value="S1_EF-P_repeat_1"/>
    <property type="match status" value="1"/>
</dbReference>
<dbReference type="CDD" id="cd05794">
    <property type="entry name" value="S1_EF-P_repeat_2"/>
    <property type="match status" value="1"/>
</dbReference>
<dbReference type="FunFam" id="2.40.50.140:FF:000004">
    <property type="entry name" value="Elongation factor P"/>
    <property type="match status" value="1"/>
</dbReference>
<dbReference type="FunFam" id="2.40.50.140:FF:000009">
    <property type="entry name" value="Elongation factor P"/>
    <property type="match status" value="1"/>
</dbReference>
<dbReference type="Gene3D" id="2.30.30.30">
    <property type="match status" value="1"/>
</dbReference>
<dbReference type="Gene3D" id="2.40.50.140">
    <property type="entry name" value="Nucleic acid-binding proteins"/>
    <property type="match status" value="2"/>
</dbReference>
<dbReference type="HAMAP" id="MF_00141">
    <property type="entry name" value="EF_P"/>
    <property type="match status" value="1"/>
</dbReference>
<dbReference type="InterPro" id="IPR015365">
    <property type="entry name" value="Elong-fact-P_C"/>
</dbReference>
<dbReference type="InterPro" id="IPR012340">
    <property type="entry name" value="NA-bd_OB-fold"/>
</dbReference>
<dbReference type="InterPro" id="IPR014722">
    <property type="entry name" value="Rib_uL2_dom2"/>
</dbReference>
<dbReference type="InterPro" id="IPR020599">
    <property type="entry name" value="Transl_elong_fac_P/YeiP"/>
</dbReference>
<dbReference type="InterPro" id="IPR013185">
    <property type="entry name" value="Transl_elong_KOW-like"/>
</dbReference>
<dbReference type="InterPro" id="IPR001059">
    <property type="entry name" value="Transl_elong_P/YeiP_cen"/>
</dbReference>
<dbReference type="InterPro" id="IPR013852">
    <property type="entry name" value="Transl_elong_P/YeiP_CS"/>
</dbReference>
<dbReference type="InterPro" id="IPR011768">
    <property type="entry name" value="Transl_elongation_fac_P"/>
</dbReference>
<dbReference type="InterPro" id="IPR008991">
    <property type="entry name" value="Translation_prot_SH3-like_sf"/>
</dbReference>
<dbReference type="NCBIfam" id="TIGR00038">
    <property type="entry name" value="efp"/>
    <property type="match status" value="1"/>
</dbReference>
<dbReference type="NCBIfam" id="NF001810">
    <property type="entry name" value="PRK00529.1"/>
    <property type="match status" value="1"/>
</dbReference>
<dbReference type="PANTHER" id="PTHR30053">
    <property type="entry name" value="ELONGATION FACTOR P"/>
    <property type="match status" value="1"/>
</dbReference>
<dbReference type="PANTHER" id="PTHR30053:SF12">
    <property type="entry name" value="ELONGATION FACTOR P (EF-P) FAMILY PROTEIN"/>
    <property type="match status" value="1"/>
</dbReference>
<dbReference type="Pfam" id="PF01132">
    <property type="entry name" value="EFP"/>
    <property type="match status" value="1"/>
</dbReference>
<dbReference type="Pfam" id="PF08207">
    <property type="entry name" value="EFP_N"/>
    <property type="match status" value="1"/>
</dbReference>
<dbReference type="Pfam" id="PF09285">
    <property type="entry name" value="Elong-fact-P_C"/>
    <property type="match status" value="1"/>
</dbReference>
<dbReference type="PIRSF" id="PIRSF005901">
    <property type="entry name" value="EF-P"/>
    <property type="match status" value="1"/>
</dbReference>
<dbReference type="SMART" id="SM01185">
    <property type="entry name" value="EFP"/>
    <property type="match status" value="1"/>
</dbReference>
<dbReference type="SMART" id="SM00841">
    <property type="entry name" value="Elong-fact-P_C"/>
    <property type="match status" value="1"/>
</dbReference>
<dbReference type="SUPFAM" id="SSF50249">
    <property type="entry name" value="Nucleic acid-binding proteins"/>
    <property type="match status" value="2"/>
</dbReference>
<dbReference type="SUPFAM" id="SSF50104">
    <property type="entry name" value="Translation proteins SH3-like domain"/>
    <property type="match status" value="1"/>
</dbReference>
<dbReference type="PROSITE" id="PS01275">
    <property type="entry name" value="EFP"/>
    <property type="match status" value="1"/>
</dbReference>
<comment type="function">
    <text evidence="1">Involved in peptide bond synthesis. Stimulates efficient translation and peptide-bond synthesis on native or reconstituted 70S ribosomes in vitro. Probably functions indirectly by altering the affinity of the ribosome for aminoacyl-tRNA, thus increasing their reactivity as acceptors for peptidyl transferase.</text>
</comment>
<comment type="pathway">
    <text evidence="1">Protein biosynthesis; polypeptide chain elongation.</text>
</comment>
<comment type="subcellular location">
    <subcellularLocation>
        <location evidence="1">Cytoplasm</location>
    </subcellularLocation>
</comment>
<comment type="similarity">
    <text evidence="1">Belongs to the elongation factor P family.</text>
</comment>